<dbReference type="EC" id="4.3.3.6" evidence="1"/>
<dbReference type="EMBL" id="AE000512">
    <property type="protein sequence ID" value="AAD35558.1"/>
    <property type="molecule type" value="Genomic_DNA"/>
</dbReference>
<dbReference type="PIR" id="A72372">
    <property type="entry name" value="A72372"/>
</dbReference>
<dbReference type="RefSeq" id="NP_228283.1">
    <property type="nucleotide sequence ID" value="NC_000853.1"/>
</dbReference>
<dbReference type="RefSeq" id="WP_004081493.1">
    <property type="nucleotide sequence ID" value="NZ_CP011107.1"/>
</dbReference>
<dbReference type="PDB" id="2ISS">
    <property type="method" value="X-ray"/>
    <property type="resolution" value="2.90 A"/>
    <property type="chains" value="A/B/C=1-293"/>
</dbReference>
<dbReference type="PDBsum" id="2ISS"/>
<dbReference type="SMR" id="Q9WYU4"/>
<dbReference type="FunCoup" id="Q9WYU4">
    <property type="interactions" value="198"/>
</dbReference>
<dbReference type="STRING" id="243274.TM_0473"/>
<dbReference type="PaxDb" id="243274-THEMA_02325"/>
<dbReference type="EnsemblBacteria" id="AAD35558">
    <property type="protein sequence ID" value="AAD35558"/>
    <property type="gene ID" value="TM_0473"/>
</dbReference>
<dbReference type="KEGG" id="tma:TM0473"/>
<dbReference type="KEGG" id="tmm:Tmari_0470"/>
<dbReference type="KEGG" id="tmw:THMA_0482"/>
<dbReference type="eggNOG" id="COG0214">
    <property type="taxonomic scope" value="Bacteria"/>
</dbReference>
<dbReference type="InParanoid" id="Q9WYU4"/>
<dbReference type="OrthoDB" id="9772545at2"/>
<dbReference type="UniPathway" id="UPA00245"/>
<dbReference type="EvolutionaryTrace" id="Q9WYU4"/>
<dbReference type="Proteomes" id="UP000008183">
    <property type="component" value="Chromosome"/>
</dbReference>
<dbReference type="GO" id="GO:0016843">
    <property type="term" value="F:amine-lyase activity"/>
    <property type="evidence" value="ECO:0000318"/>
    <property type="project" value="GO_Central"/>
</dbReference>
<dbReference type="GO" id="GO:0036381">
    <property type="term" value="F:pyridoxal 5'-phosphate synthase (glutamine hydrolysing) activity"/>
    <property type="evidence" value="ECO:0007669"/>
    <property type="project" value="UniProtKB-UniRule"/>
</dbReference>
<dbReference type="GO" id="GO:0006520">
    <property type="term" value="P:amino acid metabolic process"/>
    <property type="evidence" value="ECO:0000318"/>
    <property type="project" value="GO_Central"/>
</dbReference>
<dbReference type="GO" id="GO:0042823">
    <property type="term" value="P:pyridoxal phosphate biosynthetic process"/>
    <property type="evidence" value="ECO:0000318"/>
    <property type="project" value="GO_Central"/>
</dbReference>
<dbReference type="GO" id="GO:0008615">
    <property type="term" value="P:pyridoxine biosynthetic process"/>
    <property type="evidence" value="ECO:0000318"/>
    <property type="project" value="GO_Central"/>
</dbReference>
<dbReference type="CDD" id="cd04727">
    <property type="entry name" value="pdxS"/>
    <property type="match status" value="1"/>
</dbReference>
<dbReference type="FunFam" id="3.20.20.70:FF:000001">
    <property type="entry name" value="Pyridoxine biosynthesis protein PDX1"/>
    <property type="match status" value="1"/>
</dbReference>
<dbReference type="Gene3D" id="3.20.20.70">
    <property type="entry name" value="Aldolase class I"/>
    <property type="match status" value="1"/>
</dbReference>
<dbReference type="HAMAP" id="MF_01824">
    <property type="entry name" value="PdxS"/>
    <property type="match status" value="1"/>
</dbReference>
<dbReference type="InterPro" id="IPR013785">
    <property type="entry name" value="Aldolase_TIM"/>
</dbReference>
<dbReference type="InterPro" id="IPR001852">
    <property type="entry name" value="PdxS/SNZ"/>
</dbReference>
<dbReference type="InterPro" id="IPR033755">
    <property type="entry name" value="PdxS/SNZ_N"/>
</dbReference>
<dbReference type="InterPro" id="IPR011060">
    <property type="entry name" value="RibuloseP-bd_barrel"/>
</dbReference>
<dbReference type="NCBIfam" id="NF003215">
    <property type="entry name" value="PRK04180.1"/>
    <property type="match status" value="1"/>
</dbReference>
<dbReference type="NCBIfam" id="TIGR00343">
    <property type="entry name" value="pyridoxal 5'-phosphate synthase lyase subunit PdxS"/>
    <property type="match status" value="1"/>
</dbReference>
<dbReference type="PANTHER" id="PTHR31829">
    <property type="entry name" value="PYRIDOXAL 5'-PHOSPHATE SYNTHASE SUBUNIT SNZ1-RELATED"/>
    <property type="match status" value="1"/>
</dbReference>
<dbReference type="PANTHER" id="PTHR31829:SF0">
    <property type="entry name" value="PYRIDOXAL 5'-PHOSPHATE SYNTHASE SUBUNIT SNZ1-RELATED"/>
    <property type="match status" value="1"/>
</dbReference>
<dbReference type="Pfam" id="PF01680">
    <property type="entry name" value="SOR_SNZ"/>
    <property type="match status" value="1"/>
</dbReference>
<dbReference type="PIRSF" id="PIRSF029271">
    <property type="entry name" value="Pdx1"/>
    <property type="match status" value="1"/>
</dbReference>
<dbReference type="SUPFAM" id="SSF51366">
    <property type="entry name" value="Ribulose-phoshate binding barrel"/>
    <property type="match status" value="1"/>
</dbReference>
<dbReference type="PROSITE" id="PS01235">
    <property type="entry name" value="PDXS_SNZ_1"/>
    <property type="match status" value="1"/>
</dbReference>
<dbReference type="PROSITE" id="PS51129">
    <property type="entry name" value="PDXS_SNZ_2"/>
    <property type="match status" value="1"/>
</dbReference>
<proteinExistence type="evidence at protein level"/>
<keyword id="KW-0002">3D-structure</keyword>
<keyword id="KW-0456">Lyase</keyword>
<keyword id="KW-0663">Pyridoxal phosphate</keyword>
<keyword id="KW-1185">Reference proteome</keyword>
<keyword id="KW-0704">Schiff base</keyword>
<comment type="function">
    <text evidence="1">Catalyzes the formation of pyridoxal 5'-phosphate from ribose 5-phosphate (RBP), glyceraldehyde 3-phosphate (G3P) and ammonia. The ammonia is provided by the PdxT subunit. Can also use ribulose 5-phosphate and dihydroxyacetone phosphate as substrates, resulting from enzyme-catalyzed isomerization of RBP and G3P, respectively.</text>
</comment>
<comment type="catalytic activity">
    <reaction evidence="1">
        <text>aldehydo-D-ribose 5-phosphate + D-glyceraldehyde 3-phosphate + L-glutamine = pyridoxal 5'-phosphate + L-glutamate + phosphate + 3 H2O + H(+)</text>
        <dbReference type="Rhea" id="RHEA:31507"/>
        <dbReference type="ChEBI" id="CHEBI:15377"/>
        <dbReference type="ChEBI" id="CHEBI:15378"/>
        <dbReference type="ChEBI" id="CHEBI:29985"/>
        <dbReference type="ChEBI" id="CHEBI:43474"/>
        <dbReference type="ChEBI" id="CHEBI:58273"/>
        <dbReference type="ChEBI" id="CHEBI:58359"/>
        <dbReference type="ChEBI" id="CHEBI:59776"/>
        <dbReference type="ChEBI" id="CHEBI:597326"/>
        <dbReference type="EC" id="4.3.3.6"/>
    </reaction>
</comment>
<comment type="pathway">
    <text evidence="1">Cofactor biosynthesis; pyridoxal 5'-phosphate biosynthesis.</text>
</comment>
<comment type="subunit">
    <text evidence="1 2">Homohexamer and homododecamer. In the presence of PdxT, forms a dodecamer of heterodimers.</text>
</comment>
<comment type="similarity">
    <text evidence="1">Belongs to the PdxS/SNZ family.</text>
</comment>
<evidence type="ECO:0000255" key="1">
    <source>
        <dbReference type="HAMAP-Rule" id="MF_01824"/>
    </source>
</evidence>
<evidence type="ECO:0000269" key="2">
    <source>
    </source>
</evidence>
<evidence type="ECO:0000303" key="3">
    <source>
    </source>
</evidence>
<evidence type="ECO:0007829" key="4">
    <source>
        <dbReference type="PDB" id="2ISS"/>
    </source>
</evidence>
<accession>Q9WYU4</accession>
<protein>
    <recommendedName>
        <fullName evidence="1">Pyridoxal 5'-phosphate synthase subunit PdxS</fullName>
        <shortName evidence="1">PLP synthase subunit PdxS</shortName>
        <ecNumber evidence="1">4.3.3.6</ecNumber>
    </recommendedName>
    <alternativeName>
        <fullName evidence="1">Pdx1</fullName>
    </alternativeName>
</protein>
<organism>
    <name type="scientific">Thermotoga maritima (strain ATCC 43589 / DSM 3109 / JCM 10099 / NBRC 100826 / MSB8)</name>
    <dbReference type="NCBI Taxonomy" id="243274"/>
    <lineage>
        <taxon>Bacteria</taxon>
        <taxon>Thermotogati</taxon>
        <taxon>Thermotogota</taxon>
        <taxon>Thermotogae</taxon>
        <taxon>Thermotogales</taxon>
        <taxon>Thermotogaceae</taxon>
        <taxon>Thermotoga</taxon>
    </lineage>
</organism>
<feature type="chain" id="PRO_0000109423" description="Pyridoxal 5'-phosphate synthase subunit PdxS">
    <location>
        <begin position="1"/>
        <end position="293"/>
    </location>
</feature>
<feature type="active site" description="Schiff-base intermediate with D-ribose 5-phosphate" evidence="1 2">
    <location>
        <position position="82"/>
    </location>
</feature>
<feature type="binding site" evidence="1 2">
    <location>
        <position position="25"/>
    </location>
    <ligand>
        <name>D-ribose 5-phosphate</name>
        <dbReference type="ChEBI" id="CHEBI:78346"/>
    </ligand>
</feature>
<feature type="binding site" evidence="2">
    <location>
        <position position="103"/>
    </location>
    <ligand>
        <name>D-ribulose 5-phosphate</name>
        <dbReference type="ChEBI" id="CHEBI:58121"/>
    </ligand>
</feature>
<feature type="binding site" evidence="1 2">
    <location>
        <position position="154"/>
    </location>
    <ligand>
        <name>D-ribose 5-phosphate</name>
        <dbReference type="ChEBI" id="CHEBI:78346"/>
    </ligand>
</feature>
<feature type="binding site" evidence="1">
    <location>
        <position position="166"/>
    </location>
    <ligand>
        <name>D-glyceraldehyde 3-phosphate</name>
        <dbReference type="ChEBI" id="CHEBI:59776"/>
    </ligand>
</feature>
<feature type="binding site" evidence="1 2">
    <location>
        <position position="215"/>
    </location>
    <ligand>
        <name>D-ribose 5-phosphate</name>
        <dbReference type="ChEBI" id="CHEBI:78346"/>
    </ligand>
</feature>
<feature type="binding site" evidence="1 2">
    <location>
        <begin position="236"/>
        <end position="237"/>
    </location>
    <ligand>
        <name>D-ribose 5-phosphate</name>
        <dbReference type="ChEBI" id="CHEBI:78346"/>
    </ligand>
</feature>
<feature type="strand" evidence="4">
    <location>
        <begin position="3"/>
        <end position="6"/>
    </location>
</feature>
<feature type="helix" evidence="4">
    <location>
        <begin position="8"/>
        <end position="16"/>
    </location>
</feature>
<feature type="turn" evidence="4">
    <location>
        <begin position="17"/>
        <end position="20"/>
    </location>
</feature>
<feature type="strand" evidence="4">
    <location>
        <begin position="22"/>
        <end position="28"/>
    </location>
</feature>
<feature type="helix" evidence="4">
    <location>
        <begin position="29"/>
        <end position="38"/>
    </location>
</feature>
<feature type="strand" evidence="4">
    <location>
        <begin position="41"/>
        <end position="45"/>
    </location>
</feature>
<feature type="helix" evidence="4">
    <location>
        <begin position="50"/>
        <end position="56"/>
    </location>
</feature>
<feature type="helix" evidence="4">
    <location>
        <begin position="65"/>
        <end position="74"/>
    </location>
</feature>
<feature type="strand" evidence="4">
    <location>
        <begin position="79"/>
        <end position="84"/>
    </location>
</feature>
<feature type="helix" evidence="4">
    <location>
        <begin position="88"/>
        <end position="97"/>
    </location>
</feature>
<feature type="strand" evidence="4">
    <location>
        <begin position="100"/>
        <end position="105"/>
    </location>
</feature>
<feature type="helix" evidence="4">
    <location>
        <begin position="119"/>
        <end position="121"/>
    </location>
</feature>
<feature type="strand" evidence="4">
    <location>
        <begin position="126"/>
        <end position="132"/>
    </location>
</feature>
<feature type="helix" evidence="4">
    <location>
        <begin position="133"/>
        <end position="141"/>
    </location>
</feature>
<feature type="strand" evidence="4">
    <location>
        <begin position="145"/>
        <end position="149"/>
    </location>
</feature>
<feature type="helix" evidence="4">
    <location>
        <begin position="159"/>
        <end position="175"/>
    </location>
</feature>
<feature type="helix" evidence="4">
    <location>
        <begin position="180"/>
        <end position="190"/>
    </location>
</feature>
<feature type="helix" evidence="4">
    <location>
        <begin position="194"/>
        <end position="203"/>
    </location>
</feature>
<feature type="strand" evidence="4">
    <location>
        <begin position="207"/>
        <end position="214"/>
    </location>
</feature>
<feature type="helix" evidence="4">
    <location>
        <begin position="219"/>
        <end position="227"/>
    </location>
</feature>
<feature type="strand" evidence="4">
    <location>
        <begin position="233"/>
        <end position="236"/>
    </location>
</feature>
<feature type="helix" evidence="4">
    <location>
        <begin position="237"/>
        <end position="240"/>
    </location>
</feature>
<feature type="helix" evidence="4">
    <location>
        <begin position="245"/>
        <end position="257"/>
    </location>
</feature>
<feature type="helix" evidence="4">
    <location>
        <begin position="262"/>
        <end position="269"/>
    </location>
</feature>
<reference key="1">
    <citation type="journal article" date="1999" name="Nature">
        <title>Evidence for lateral gene transfer between Archaea and Bacteria from genome sequence of Thermotoga maritima.</title>
        <authorList>
            <person name="Nelson K.E."/>
            <person name="Clayton R.A."/>
            <person name="Gill S.R."/>
            <person name="Gwinn M.L."/>
            <person name="Dodson R.J."/>
            <person name="Haft D.H."/>
            <person name="Hickey E.K."/>
            <person name="Peterson J.D."/>
            <person name="Nelson W.C."/>
            <person name="Ketchum K.A."/>
            <person name="McDonald L.A."/>
            <person name="Utterback T.R."/>
            <person name="Malek J.A."/>
            <person name="Linher K.D."/>
            <person name="Garrett M.M."/>
            <person name="Stewart A.M."/>
            <person name="Cotton M.D."/>
            <person name="Pratt M.S."/>
            <person name="Phillips C.A."/>
            <person name="Richardson D.L."/>
            <person name="Heidelberg J.F."/>
            <person name="Sutton G.G."/>
            <person name="Fleischmann R.D."/>
            <person name="Eisen J.A."/>
            <person name="White O."/>
            <person name="Salzberg S.L."/>
            <person name="Smith H.O."/>
            <person name="Venter J.C."/>
            <person name="Fraser C.M."/>
        </authorList>
    </citation>
    <scope>NUCLEOTIDE SEQUENCE [LARGE SCALE GENOMIC DNA]</scope>
    <source>
        <strain>ATCC 43589 / DSM 3109 / JCM 10099 / NBRC 100826 / MSB8</strain>
    </source>
</reference>
<reference key="2">
    <citation type="journal article" date="2006" name="Biochemistry">
        <title>Structural insights into the mechanism of the PLP synthase holoenzyme from Thermotoga maritima.</title>
        <authorList>
            <person name="Zein F."/>
            <person name="Zhang Y."/>
            <person name="Kang Y.N."/>
            <person name="Burns K."/>
            <person name="Begley T.P."/>
            <person name="Ealick S.E."/>
        </authorList>
    </citation>
    <scope>X-RAY CRYSTALLOGRAPHY (2.90 ANGSTROMS) IN COMPLEX WITH PDXT SUBUNIT; RIBULOSE-5-PHOSPHATE AND PHOSPHATE</scope>
    <scope>SUBUNIT</scope>
    <scope>ACTIVE SITE</scope>
    <scope>REACTION MECHANISM</scope>
</reference>
<name>PDXS_THEMA</name>
<sequence length="293" mass="32127">MEIKKGTWIIKKGFAEMFKGGVIMDVTSAEQAKIAEEAGAVAVMALERVPADIRKEGGVARMASIAKIREIMEAVSIPVMAKVRIGHIAEAKILEELGVDFIDESEVLTPADDRFHINKHEFKVPFVCGARDLGEALRRIAEGAAMIRTKGEAGTGNVVEAVKHMRRVMEQIKQVTKMEDEELVAYGKEIGAPVELLREVKRLGRLPVVNFAAGGVATPADAALMMMLGADGVFVGSGIFKSKDPRKMAKAMVLAVTYWDNPRILLKISEDIGEPMRGLDVEELEVRMQERGW</sequence>
<gene>
    <name evidence="1" type="primary">pdxS</name>
    <name evidence="3" type="synonym">yaaD</name>
    <name type="ordered locus">TM_0473</name>
</gene>